<evidence type="ECO:0000255" key="1">
    <source>
        <dbReference type="HAMAP-Rule" id="MF_00658"/>
    </source>
</evidence>
<feature type="chain" id="PRO_0000198107" description="Ribosomal RNA large subunit methyltransferase H">
    <location>
        <begin position="1"/>
        <end position="156"/>
    </location>
</feature>
<feature type="binding site" evidence="1">
    <location>
        <position position="104"/>
    </location>
    <ligand>
        <name>S-adenosyl-L-methionine</name>
        <dbReference type="ChEBI" id="CHEBI:59789"/>
    </ligand>
</feature>
<feature type="binding site" evidence="1">
    <location>
        <begin position="123"/>
        <end position="128"/>
    </location>
    <ligand>
        <name>S-adenosyl-L-methionine</name>
        <dbReference type="ChEBI" id="CHEBI:59789"/>
    </ligand>
</feature>
<keyword id="KW-0963">Cytoplasm</keyword>
<keyword id="KW-0489">Methyltransferase</keyword>
<keyword id="KW-1185">Reference proteome</keyword>
<keyword id="KW-0698">rRNA processing</keyword>
<keyword id="KW-0949">S-adenosyl-L-methionine</keyword>
<keyword id="KW-0808">Transferase</keyword>
<protein>
    <recommendedName>
        <fullName evidence="1">Ribosomal RNA large subunit methyltransferase H</fullName>
        <ecNumber evidence="1">2.1.1.177</ecNumber>
    </recommendedName>
    <alternativeName>
        <fullName evidence="1">23S rRNA (pseudouridine1915-N3)-methyltransferase</fullName>
    </alternativeName>
    <alternativeName>
        <fullName evidence="1">23S rRNA m3Psi1915 methyltransferase</fullName>
    </alternativeName>
    <alternativeName>
        <fullName evidence="1">rRNA (pseudouridine-N3-)-methyltransferase RlmH</fullName>
    </alternativeName>
</protein>
<organism>
    <name type="scientific">Chromobacterium violaceum (strain ATCC 12472 / DSM 30191 / JCM 1249 / CCUG 213 / NBRC 12614 / NCIMB 9131 / NCTC 9757 / MK)</name>
    <dbReference type="NCBI Taxonomy" id="243365"/>
    <lineage>
        <taxon>Bacteria</taxon>
        <taxon>Pseudomonadati</taxon>
        <taxon>Pseudomonadota</taxon>
        <taxon>Betaproteobacteria</taxon>
        <taxon>Neisseriales</taxon>
        <taxon>Chromobacteriaceae</taxon>
        <taxon>Chromobacterium</taxon>
    </lineage>
</organism>
<proteinExistence type="inferred from homology"/>
<reference key="1">
    <citation type="journal article" date="2003" name="Proc. Natl. Acad. Sci. U.S.A.">
        <title>The complete genome sequence of Chromobacterium violaceum reveals remarkable and exploitable bacterial adaptability.</title>
        <authorList>
            <person name="Vasconcelos A.T.R."/>
            <person name="de Almeida D.F."/>
            <person name="Hungria M."/>
            <person name="Guimaraes C.T."/>
            <person name="Antonio R.V."/>
            <person name="Almeida F.C."/>
            <person name="de Almeida L.G.P."/>
            <person name="de Almeida R."/>
            <person name="Alves-Gomes J.A."/>
            <person name="Andrade E.M."/>
            <person name="Araripe J."/>
            <person name="de Araujo M.F.F."/>
            <person name="Astolfi-Filho S."/>
            <person name="Azevedo V."/>
            <person name="Baptista A.J."/>
            <person name="Bataus L.A.M."/>
            <person name="Batista J.S."/>
            <person name="Belo A."/>
            <person name="van den Berg C."/>
            <person name="Bogo M."/>
            <person name="Bonatto S."/>
            <person name="Bordignon J."/>
            <person name="Brigido M.M."/>
            <person name="Brito C.A."/>
            <person name="Brocchi M."/>
            <person name="Burity H.A."/>
            <person name="Camargo A.A."/>
            <person name="Cardoso D.D.P."/>
            <person name="Carneiro N.P."/>
            <person name="Carraro D.M."/>
            <person name="Carvalho C.M.B."/>
            <person name="Cascardo J.C.M."/>
            <person name="Cavada B.S."/>
            <person name="Chueire L.M.O."/>
            <person name="Creczynski-Pasa T.B."/>
            <person name="Cunha-Junior N.C."/>
            <person name="Fagundes N."/>
            <person name="Falcao C.L."/>
            <person name="Fantinatti F."/>
            <person name="Farias I.P."/>
            <person name="Felipe M.S.S."/>
            <person name="Ferrari L.P."/>
            <person name="Ferro J.A."/>
            <person name="Ferro M.I.T."/>
            <person name="Franco G.R."/>
            <person name="Freitas N.S.A."/>
            <person name="Furlan L.R."/>
            <person name="Gazzinelli R.T."/>
            <person name="Gomes E.A."/>
            <person name="Goncalves P.R."/>
            <person name="Grangeiro T.B."/>
            <person name="Grattapaglia D."/>
            <person name="Grisard E.C."/>
            <person name="Hanna E.S."/>
            <person name="Jardim S.N."/>
            <person name="Laurino J."/>
            <person name="Leoi L.C.T."/>
            <person name="Lima L.F.A."/>
            <person name="Loureiro M.F."/>
            <person name="Lyra M.C.C.P."/>
            <person name="Madeira H.M.F."/>
            <person name="Manfio G.P."/>
            <person name="Maranhao A.Q."/>
            <person name="Martins W.S."/>
            <person name="di Mauro S.M.Z."/>
            <person name="de Medeiros S.R.B."/>
            <person name="Meissner R.V."/>
            <person name="Moreira M.A.M."/>
            <person name="Nascimento F.F."/>
            <person name="Nicolas M.F."/>
            <person name="Oliveira J.G."/>
            <person name="Oliveira S.C."/>
            <person name="Paixao R.F.C."/>
            <person name="Parente J.A."/>
            <person name="Pedrosa F.O."/>
            <person name="Pena S.D.J."/>
            <person name="Pereira J.O."/>
            <person name="Pereira M."/>
            <person name="Pinto L.S.R.C."/>
            <person name="Pinto L.S."/>
            <person name="Porto J.I.R."/>
            <person name="Potrich D.P."/>
            <person name="Ramalho-Neto C.E."/>
            <person name="Reis A.M.M."/>
            <person name="Rigo L.U."/>
            <person name="Rondinelli E."/>
            <person name="Santos E.B.P."/>
            <person name="Santos F.R."/>
            <person name="Schneider M.P.C."/>
            <person name="Seuanez H.N."/>
            <person name="Silva A.M.R."/>
            <person name="da Silva A.L.C."/>
            <person name="Silva D.W."/>
            <person name="Silva R."/>
            <person name="Simoes I.C."/>
            <person name="Simon D."/>
            <person name="Soares C.M.A."/>
            <person name="Soares R.B.A."/>
            <person name="Souza E.M."/>
            <person name="Souza K.R.L."/>
            <person name="Souza R.C."/>
            <person name="Steffens M.B.R."/>
            <person name="Steindel M."/>
            <person name="Teixeira S.R."/>
            <person name="Urmenyi T."/>
            <person name="Vettore A."/>
            <person name="Wassem R."/>
            <person name="Zaha A."/>
            <person name="Simpson A.J.G."/>
        </authorList>
    </citation>
    <scope>NUCLEOTIDE SEQUENCE [LARGE SCALE GENOMIC DNA]</scope>
    <source>
        <strain>ATCC 12472 / DSM 30191 / JCM 1249 / CCUG 213 / NBRC 12614 / NCIMB 9131 / NCTC 9757 / MK</strain>
    </source>
</reference>
<gene>
    <name evidence="1" type="primary">rlmH</name>
    <name type="ordered locus">CV_0517</name>
</gene>
<comment type="function">
    <text evidence="1">Specifically methylates the pseudouridine at position 1915 (m3Psi1915) in 23S rRNA.</text>
</comment>
<comment type="catalytic activity">
    <reaction evidence="1">
        <text>pseudouridine(1915) in 23S rRNA + S-adenosyl-L-methionine = N(3)-methylpseudouridine(1915) in 23S rRNA + S-adenosyl-L-homocysteine + H(+)</text>
        <dbReference type="Rhea" id="RHEA:42752"/>
        <dbReference type="Rhea" id="RHEA-COMP:10221"/>
        <dbReference type="Rhea" id="RHEA-COMP:10222"/>
        <dbReference type="ChEBI" id="CHEBI:15378"/>
        <dbReference type="ChEBI" id="CHEBI:57856"/>
        <dbReference type="ChEBI" id="CHEBI:59789"/>
        <dbReference type="ChEBI" id="CHEBI:65314"/>
        <dbReference type="ChEBI" id="CHEBI:74486"/>
        <dbReference type="EC" id="2.1.1.177"/>
    </reaction>
</comment>
<comment type="subunit">
    <text evidence="1">Homodimer.</text>
</comment>
<comment type="subcellular location">
    <subcellularLocation>
        <location evidence="1">Cytoplasm</location>
    </subcellularLocation>
</comment>
<comment type="similarity">
    <text evidence="1">Belongs to the RNA methyltransferase RlmH family.</text>
</comment>
<name>RLMH_CHRVO</name>
<dbReference type="EC" id="2.1.1.177" evidence="1"/>
<dbReference type="EMBL" id="AE016825">
    <property type="protein sequence ID" value="AAQ58194.1"/>
    <property type="molecule type" value="Genomic_DNA"/>
</dbReference>
<dbReference type="RefSeq" id="WP_011134072.1">
    <property type="nucleotide sequence ID" value="NC_005085.1"/>
</dbReference>
<dbReference type="SMR" id="Q7P0P9"/>
<dbReference type="STRING" id="243365.CV_0517"/>
<dbReference type="KEGG" id="cvi:CV_0517"/>
<dbReference type="eggNOG" id="COG1576">
    <property type="taxonomic scope" value="Bacteria"/>
</dbReference>
<dbReference type="HOGENOM" id="CLU_100552_1_0_4"/>
<dbReference type="OrthoDB" id="9806643at2"/>
<dbReference type="Proteomes" id="UP000001424">
    <property type="component" value="Chromosome"/>
</dbReference>
<dbReference type="GO" id="GO:0005737">
    <property type="term" value="C:cytoplasm"/>
    <property type="evidence" value="ECO:0007669"/>
    <property type="project" value="UniProtKB-SubCell"/>
</dbReference>
<dbReference type="GO" id="GO:0070038">
    <property type="term" value="F:rRNA (pseudouridine-N3-)-methyltransferase activity"/>
    <property type="evidence" value="ECO:0007669"/>
    <property type="project" value="UniProtKB-UniRule"/>
</dbReference>
<dbReference type="CDD" id="cd18081">
    <property type="entry name" value="RlmH-like"/>
    <property type="match status" value="1"/>
</dbReference>
<dbReference type="Gene3D" id="3.40.1280.10">
    <property type="match status" value="1"/>
</dbReference>
<dbReference type="HAMAP" id="MF_00658">
    <property type="entry name" value="23SrRNA_methyltr_H"/>
    <property type="match status" value="1"/>
</dbReference>
<dbReference type="InterPro" id="IPR029028">
    <property type="entry name" value="Alpha/beta_knot_MTases"/>
</dbReference>
<dbReference type="InterPro" id="IPR003742">
    <property type="entry name" value="RlmH-like"/>
</dbReference>
<dbReference type="InterPro" id="IPR029026">
    <property type="entry name" value="tRNA_m1G_MTases_N"/>
</dbReference>
<dbReference type="NCBIfam" id="NF000986">
    <property type="entry name" value="PRK00103.1-4"/>
    <property type="match status" value="1"/>
</dbReference>
<dbReference type="NCBIfam" id="TIGR00246">
    <property type="entry name" value="tRNA_RlmH_YbeA"/>
    <property type="match status" value="1"/>
</dbReference>
<dbReference type="PANTHER" id="PTHR33603">
    <property type="entry name" value="METHYLTRANSFERASE"/>
    <property type="match status" value="1"/>
</dbReference>
<dbReference type="PANTHER" id="PTHR33603:SF1">
    <property type="entry name" value="RIBOSOMAL RNA LARGE SUBUNIT METHYLTRANSFERASE H"/>
    <property type="match status" value="1"/>
</dbReference>
<dbReference type="Pfam" id="PF02590">
    <property type="entry name" value="SPOUT_MTase"/>
    <property type="match status" value="1"/>
</dbReference>
<dbReference type="PIRSF" id="PIRSF004505">
    <property type="entry name" value="MT_bac"/>
    <property type="match status" value="1"/>
</dbReference>
<dbReference type="SUPFAM" id="SSF75217">
    <property type="entry name" value="alpha/beta knot"/>
    <property type="match status" value="1"/>
</dbReference>
<accession>Q7P0P9</accession>
<sequence length="156" mass="17370">MKITILAVGTKMPRWVDEAYTDYAKRFGRDITLELKEIKPEKRGGGVTAEKGIAAEHERLIAAIPPRARLVVMDERGKNWTSVKLAEGLKEWMAGGGDVVFVIGGADGLSAELKQRADVLLQLSAMTLPHGMVRVMLAEQIYRAYSILNNHPYHRE</sequence>